<sequence>MKYQVLLYYKYTTIEDPEAFAKEHLAFCKSLNLKGRILVATEGINGTLSGTVEETEKYMEAMQADERFKDTFFKIDPAEEMAFRKMFVRPRSELVALNLEEDVDPLETTGKYLEPAEFKEALLDEDTVVIDARNDYEYDLGHFRGAVRPDIRSFRELPQWIRENKEKFMDKKIVTYCTGGIRCEKFSGWLLKEGFEDVAQLHGGIANYGKNPETRGELWDGKMYVFDDRISVEINHVDKKVIGKDWFDGTPCERYINCANPECNRQILTSEENEHKHLGGCSLECSQHPANRYVKKHNLTEAEVAERLALLEAVEV</sequence>
<feature type="chain" id="PRO_0000161475" description="tRNA uridine(34) hydroxylase">
    <location>
        <begin position="1"/>
        <end position="316"/>
    </location>
</feature>
<feature type="domain" description="Rhodanese" evidence="1">
    <location>
        <begin position="123"/>
        <end position="217"/>
    </location>
</feature>
<feature type="active site" description="Cysteine persulfide intermediate" evidence="1">
    <location>
        <position position="177"/>
    </location>
</feature>
<comment type="function">
    <text evidence="1">Catalyzes oxygen-dependent 5-hydroxyuridine (ho5U) modification at position 34 in tRNAs.</text>
</comment>
<comment type="catalytic activity">
    <reaction evidence="1">
        <text>uridine(34) in tRNA + AH2 + O2 = 5-hydroxyuridine(34) in tRNA + A + H2O</text>
        <dbReference type="Rhea" id="RHEA:64224"/>
        <dbReference type="Rhea" id="RHEA-COMP:11727"/>
        <dbReference type="Rhea" id="RHEA-COMP:13381"/>
        <dbReference type="ChEBI" id="CHEBI:13193"/>
        <dbReference type="ChEBI" id="CHEBI:15377"/>
        <dbReference type="ChEBI" id="CHEBI:15379"/>
        <dbReference type="ChEBI" id="CHEBI:17499"/>
        <dbReference type="ChEBI" id="CHEBI:65315"/>
        <dbReference type="ChEBI" id="CHEBI:136877"/>
    </reaction>
</comment>
<comment type="similarity">
    <text evidence="1">Belongs to the TrhO family.</text>
</comment>
<keyword id="KW-0560">Oxidoreductase</keyword>
<keyword id="KW-1185">Reference proteome</keyword>
<keyword id="KW-0819">tRNA processing</keyword>
<organism>
    <name type="scientific">Enterococcus faecalis (strain ATCC 700802 / V583)</name>
    <dbReference type="NCBI Taxonomy" id="226185"/>
    <lineage>
        <taxon>Bacteria</taxon>
        <taxon>Bacillati</taxon>
        <taxon>Bacillota</taxon>
        <taxon>Bacilli</taxon>
        <taxon>Lactobacillales</taxon>
        <taxon>Enterococcaceae</taxon>
        <taxon>Enterococcus</taxon>
    </lineage>
</organism>
<reference key="1">
    <citation type="journal article" date="2003" name="Science">
        <title>Role of mobile DNA in the evolution of vancomycin-resistant Enterococcus faecalis.</title>
        <authorList>
            <person name="Paulsen I.T."/>
            <person name="Banerjei L."/>
            <person name="Myers G.S.A."/>
            <person name="Nelson K.E."/>
            <person name="Seshadri R."/>
            <person name="Read T.D."/>
            <person name="Fouts D.E."/>
            <person name="Eisen J.A."/>
            <person name="Gill S.R."/>
            <person name="Heidelberg J.F."/>
            <person name="Tettelin H."/>
            <person name="Dodson R.J."/>
            <person name="Umayam L.A."/>
            <person name="Brinkac L.M."/>
            <person name="Beanan M.J."/>
            <person name="Daugherty S.C."/>
            <person name="DeBoy R.T."/>
            <person name="Durkin S.A."/>
            <person name="Kolonay J.F."/>
            <person name="Madupu R."/>
            <person name="Nelson W.C."/>
            <person name="Vamathevan J.J."/>
            <person name="Tran B."/>
            <person name="Upton J."/>
            <person name="Hansen T."/>
            <person name="Shetty J."/>
            <person name="Khouri H.M."/>
            <person name="Utterback T.R."/>
            <person name="Radune D."/>
            <person name="Ketchum K.A."/>
            <person name="Dougherty B.A."/>
            <person name="Fraser C.M."/>
        </authorList>
    </citation>
    <scope>NUCLEOTIDE SEQUENCE [LARGE SCALE GENOMIC DNA]</scope>
    <source>
        <strain>ATCC 700802 / V583</strain>
    </source>
</reference>
<protein>
    <recommendedName>
        <fullName evidence="1">tRNA uridine(34) hydroxylase</fullName>
        <ecNumber evidence="1">1.14.-.-</ecNumber>
    </recommendedName>
    <alternativeName>
        <fullName evidence="1">tRNA hydroxylation protein O</fullName>
    </alternativeName>
</protein>
<evidence type="ECO:0000255" key="1">
    <source>
        <dbReference type="HAMAP-Rule" id="MF_00469"/>
    </source>
</evidence>
<dbReference type="EC" id="1.14.-.-" evidence="1"/>
<dbReference type="EMBL" id="AE016830">
    <property type="protein sequence ID" value="AAO80566.1"/>
    <property type="molecule type" value="Genomic_DNA"/>
</dbReference>
<dbReference type="RefSeq" id="NP_814496.1">
    <property type="nucleotide sequence ID" value="NC_004668.1"/>
</dbReference>
<dbReference type="RefSeq" id="WP_010773450.1">
    <property type="nucleotide sequence ID" value="NZ_KE136527.1"/>
</dbReference>
<dbReference type="SMR" id="Q837T2"/>
<dbReference type="STRING" id="226185.EF_0748"/>
<dbReference type="DNASU" id="1199645"/>
<dbReference type="EnsemblBacteria" id="AAO80566">
    <property type="protein sequence ID" value="AAO80566"/>
    <property type="gene ID" value="EF_0748"/>
</dbReference>
<dbReference type="KEGG" id="efa:EF0748"/>
<dbReference type="PATRIC" id="fig|226185.45.peg.2688"/>
<dbReference type="eggNOG" id="COG1054">
    <property type="taxonomic scope" value="Bacteria"/>
</dbReference>
<dbReference type="HOGENOM" id="CLU_038878_1_0_9"/>
<dbReference type="Proteomes" id="UP000001415">
    <property type="component" value="Chromosome"/>
</dbReference>
<dbReference type="GO" id="GO:0016705">
    <property type="term" value="F:oxidoreductase activity, acting on paired donors, with incorporation or reduction of molecular oxygen"/>
    <property type="evidence" value="ECO:0007669"/>
    <property type="project" value="UniProtKB-UniRule"/>
</dbReference>
<dbReference type="GO" id="GO:0006400">
    <property type="term" value="P:tRNA modification"/>
    <property type="evidence" value="ECO:0007669"/>
    <property type="project" value="UniProtKB-UniRule"/>
</dbReference>
<dbReference type="CDD" id="cd01518">
    <property type="entry name" value="RHOD_YceA"/>
    <property type="match status" value="1"/>
</dbReference>
<dbReference type="Gene3D" id="3.30.70.100">
    <property type="match status" value="1"/>
</dbReference>
<dbReference type="Gene3D" id="3.40.250.10">
    <property type="entry name" value="Rhodanese-like domain"/>
    <property type="match status" value="1"/>
</dbReference>
<dbReference type="HAMAP" id="MF_00469">
    <property type="entry name" value="TrhO"/>
    <property type="match status" value="1"/>
</dbReference>
<dbReference type="InterPro" id="IPR001763">
    <property type="entry name" value="Rhodanese-like_dom"/>
</dbReference>
<dbReference type="InterPro" id="IPR036873">
    <property type="entry name" value="Rhodanese-like_dom_sf"/>
</dbReference>
<dbReference type="InterPro" id="IPR022111">
    <property type="entry name" value="Rhodanese_C"/>
</dbReference>
<dbReference type="InterPro" id="IPR020936">
    <property type="entry name" value="TrhO"/>
</dbReference>
<dbReference type="InterPro" id="IPR040503">
    <property type="entry name" value="TRHO_N"/>
</dbReference>
<dbReference type="NCBIfam" id="NF001135">
    <property type="entry name" value="PRK00142.1-3"/>
    <property type="match status" value="1"/>
</dbReference>
<dbReference type="PANTHER" id="PTHR43268:SF3">
    <property type="entry name" value="RHODANESE-LIKE DOMAIN-CONTAINING PROTEIN 7-RELATED"/>
    <property type="match status" value="1"/>
</dbReference>
<dbReference type="PANTHER" id="PTHR43268">
    <property type="entry name" value="THIOSULFATE SULFURTRANSFERASE/RHODANESE-LIKE DOMAIN-CONTAINING PROTEIN 2"/>
    <property type="match status" value="1"/>
</dbReference>
<dbReference type="Pfam" id="PF00581">
    <property type="entry name" value="Rhodanese"/>
    <property type="match status" value="1"/>
</dbReference>
<dbReference type="Pfam" id="PF12368">
    <property type="entry name" value="Rhodanese_C"/>
    <property type="match status" value="1"/>
</dbReference>
<dbReference type="Pfam" id="PF17773">
    <property type="entry name" value="UPF0176_N"/>
    <property type="match status" value="1"/>
</dbReference>
<dbReference type="SMART" id="SM00450">
    <property type="entry name" value="RHOD"/>
    <property type="match status" value="1"/>
</dbReference>
<dbReference type="SUPFAM" id="SSF52821">
    <property type="entry name" value="Rhodanese/Cell cycle control phosphatase"/>
    <property type="match status" value="1"/>
</dbReference>
<dbReference type="PROSITE" id="PS50206">
    <property type="entry name" value="RHODANESE_3"/>
    <property type="match status" value="1"/>
</dbReference>
<proteinExistence type="inferred from homology"/>
<accession>Q837T2</accession>
<gene>
    <name evidence="1" type="primary">trhO</name>
    <name type="ordered locus">EF_0748</name>
</gene>
<name>TRHO_ENTFA</name>